<proteinExistence type="inferred from homology"/>
<comment type="function">
    <text evidence="1">Catalyzes the attachment of L-aspartate to tRNA(Asp) in a two-step reaction: L-aspartate is first activated by ATP to form Asp-AMP and then transferred to the acceptor end of tRNA(Asp).</text>
</comment>
<comment type="catalytic activity">
    <reaction evidence="1">
        <text>tRNA(Asp) + L-aspartate + ATP = L-aspartyl-tRNA(Asp) + AMP + diphosphate</text>
        <dbReference type="Rhea" id="RHEA:19649"/>
        <dbReference type="Rhea" id="RHEA-COMP:9660"/>
        <dbReference type="Rhea" id="RHEA-COMP:9678"/>
        <dbReference type="ChEBI" id="CHEBI:29991"/>
        <dbReference type="ChEBI" id="CHEBI:30616"/>
        <dbReference type="ChEBI" id="CHEBI:33019"/>
        <dbReference type="ChEBI" id="CHEBI:78442"/>
        <dbReference type="ChEBI" id="CHEBI:78516"/>
        <dbReference type="ChEBI" id="CHEBI:456215"/>
        <dbReference type="EC" id="6.1.1.12"/>
    </reaction>
</comment>
<comment type="subunit">
    <text evidence="1">Homodimer.</text>
</comment>
<comment type="subcellular location">
    <subcellularLocation>
        <location evidence="1">Cytoplasm</location>
    </subcellularLocation>
</comment>
<comment type="similarity">
    <text evidence="1">Belongs to the class-II aminoacyl-tRNA synthetase family. Type 1 subfamily.</text>
</comment>
<keyword id="KW-0030">Aminoacyl-tRNA synthetase</keyword>
<keyword id="KW-0067">ATP-binding</keyword>
<keyword id="KW-0963">Cytoplasm</keyword>
<keyword id="KW-0436">Ligase</keyword>
<keyword id="KW-0547">Nucleotide-binding</keyword>
<keyword id="KW-0648">Protein biosynthesis</keyword>
<dbReference type="EC" id="6.1.1.12" evidence="1"/>
<dbReference type="EMBL" id="CP000668">
    <property type="protein sequence ID" value="ABP39467.1"/>
    <property type="molecule type" value="Genomic_DNA"/>
</dbReference>
<dbReference type="RefSeq" id="WP_002211204.1">
    <property type="nucleotide sequence ID" value="NZ_CP009715.1"/>
</dbReference>
<dbReference type="SMR" id="A4TJK5"/>
<dbReference type="GeneID" id="57976608"/>
<dbReference type="KEGG" id="ypp:YPDSF_1069"/>
<dbReference type="PATRIC" id="fig|386656.14.peg.2764"/>
<dbReference type="GO" id="GO:0005737">
    <property type="term" value="C:cytoplasm"/>
    <property type="evidence" value="ECO:0007669"/>
    <property type="project" value="UniProtKB-SubCell"/>
</dbReference>
<dbReference type="GO" id="GO:0004815">
    <property type="term" value="F:aspartate-tRNA ligase activity"/>
    <property type="evidence" value="ECO:0007669"/>
    <property type="project" value="UniProtKB-UniRule"/>
</dbReference>
<dbReference type="GO" id="GO:0005524">
    <property type="term" value="F:ATP binding"/>
    <property type="evidence" value="ECO:0007669"/>
    <property type="project" value="UniProtKB-UniRule"/>
</dbReference>
<dbReference type="GO" id="GO:0003676">
    <property type="term" value="F:nucleic acid binding"/>
    <property type="evidence" value="ECO:0007669"/>
    <property type="project" value="InterPro"/>
</dbReference>
<dbReference type="GO" id="GO:0006422">
    <property type="term" value="P:aspartyl-tRNA aminoacylation"/>
    <property type="evidence" value="ECO:0007669"/>
    <property type="project" value="UniProtKB-UniRule"/>
</dbReference>
<dbReference type="CDD" id="cd00777">
    <property type="entry name" value="AspRS_core"/>
    <property type="match status" value="1"/>
</dbReference>
<dbReference type="CDD" id="cd04317">
    <property type="entry name" value="EcAspRS_like_N"/>
    <property type="match status" value="1"/>
</dbReference>
<dbReference type="FunFam" id="2.40.50.140:FF:000080">
    <property type="entry name" value="Aspartate--tRNA ligase"/>
    <property type="match status" value="1"/>
</dbReference>
<dbReference type="Gene3D" id="3.30.930.10">
    <property type="entry name" value="Bira Bifunctional Protein, Domain 2"/>
    <property type="match status" value="1"/>
</dbReference>
<dbReference type="Gene3D" id="3.30.1360.30">
    <property type="entry name" value="GAD-like domain"/>
    <property type="match status" value="1"/>
</dbReference>
<dbReference type="Gene3D" id="2.40.50.140">
    <property type="entry name" value="Nucleic acid-binding proteins"/>
    <property type="match status" value="1"/>
</dbReference>
<dbReference type="HAMAP" id="MF_00044">
    <property type="entry name" value="Asp_tRNA_synth_type1"/>
    <property type="match status" value="1"/>
</dbReference>
<dbReference type="InterPro" id="IPR004364">
    <property type="entry name" value="Aa-tRNA-synt_II"/>
</dbReference>
<dbReference type="InterPro" id="IPR006195">
    <property type="entry name" value="aa-tRNA-synth_II"/>
</dbReference>
<dbReference type="InterPro" id="IPR045864">
    <property type="entry name" value="aa-tRNA-synth_II/BPL/LPL"/>
</dbReference>
<dbReference type="InterPro" id="IPR004524">
    <property type="entry name" value="Asp-tRNA-ligase_1"/>
</dbReference>
<dbReference type="InterPro" id="IPR047089">
    <property type="entry name" value="Asp-tRNA-ligase_1_N"/>
</dbReference>
<dbReference type="InterPro" id="IPR002312">
    <property type="entry name" value="Asp/Asn-tRNA-synth_IIb"/>
</dbReference>
<dbReference type="InterPro" id="IPR047090">
    <property type="entry name" value="AspRS_core"/>
</dbReference>
<dbReference type="InterPro" id="IPR004115">
    <property type="entry name" value="GAD-like_sf"/>
</dbReference>
<dbReference type="InterPro" id="IPR029351">
    <property type="entry name" value="GAD_dom"/>
</dbReference>
<dbReference type="InterPro" id="IPR012340">
    <property type="entry name" value="NA-bd_OB-fold"/>
</dbReference>
<dbReference type="InterPro" id="IPR004365">
    <property type="entry name" value="NA-bd_OB_tRNA"/>
</dbReference>
<dbReference type="NCBIfam" id="TIGR00459">
    <property type="entry name" value="aspS_bact"/>
    <property type="match status" value="1"/>
</dbReference>
<dbReference type="NCBIfam" id="NF001750">
    <property type="entry name" value="PRK00476.1"/>
    <property type="match status" value="1"/>
</dbReference>
<dbReference type="PANTHER" id="PTHR22594:SF5">
    <property type="entry name" value="ASPARTATE--TRNA LIGASE, MITOCHONDRIAL"/>
    <property type="match status" value="1"/>
</dbReference>
<dbReference type="PANTHER" id="PTHR22594">
    <property type="entry name" value="ASPARTYL/LYSYL-TRNA SYNTHETASE"/>
    <property type="match status" value="1"/>
</dbReference>
<dbReference type="Pfam" id="PF02938">
    <property type="entry name" value="GAD"/>
    <property type="match status" value="1"/>
</dbReference>
<dbReference type="Pfam" id="PF00152">
    <property type="entry name" value="tRNA-synt_2"/>
    <property type="match status" value="1"/>
</dbReference>
<dbReference type="Pfam" id="PF01336">
    <property type="entry name" value="tRNA_anti-codon"/>
    <property type="match status" value="1"/>
</dbReference>
<dbReference type="PRINTS" id="PR01042">
    <property type="entry name" value="TRNASYNTHASP"/>
</dbReference>
<dbReference type="SUPFAM" id="SSF55681">
    <property type="entry name" value="Class II aaRS and biotin synthetases"/>
    <property type="match status" value="1"/>
</dbReference>
<dbReference type="SUPFAM" id="SSF55261">
    <property type="entry name" value="GAD domain-like"/>
    <property type="match status" value="1"/>
</dbReference>
<dbReference type="SUPFAM" id="SSF50249">
    <property type="entry name" value="Nucleic acid-binding proteins"/>
    <property type="match status" value="1"/>
</dbReference>
<dbReference type="PROSITE" id="PS50862">
    <property type="entry name" value="AA_TRNA_LIGASE_II"/>
    <property type="match status" value="1"/>
</dbReference>
<protein>
    <recommendedName>
        <fullName evidence="1">Aspartate--tRNA ligase</fullName>
        <ecNumber evidence="1">6.1.1.12</ecNumber>
    </recommendedName>
    <alternativeName>
        <fullName evidence="1">Aspartyl-tRNA synthetase</fullName>
        <shortName evidence="1">AspRS</shortName>
    </alternativeName>
</protein>
<accession>A4TJK5</accession>
<name>SYD_YERPP</name>
<organism>
    <name type="scientific">Yersinia pestis (strain Pestoides F)</name>
    <dbReference type="NCBI Taxonomy" id="386656"/>
    <lineage>
        <taxon>Bacteria</taxon>
        <taxon>Pseudomonadati</taxon>
        <taxon>Pseudomonadota</taxon>
        <taxon>Gammaproteobacteria</taxon>
        <taxon>Enterobacterales</taxon>
        <taxon>Yersiniaceae</taxon>
        <taxon>Yersinia</taxon>
    </lineage>
</organism>
<evidence type="ECO:0000255" key="1">
    <source>
        <dbReference type="HAMAP-Rule" id="MF_00044"/>
    </source>
</evidence>
<gene>
    <name evidence="1" type="primary">aspS</name>
    <name type="ordered locus">YPDSF_1069</name>
</gene>
<reference key="1">
    <citation type="submission" date="2007-02" db="EMBL/GenBank/DDBJ databases">
        <title>Complete sequence of chromosome of Yersinia pestis Pestoides F.</title>
        <authorList>
            <consortium name="US DOE Joint Genome Institute"/>
            <person name="Copeland A."/>
            <person name="Lucas S."/>
            <person name="Lapidus A."/>
            <person name="Barry K."/>
            <person name="Detter J.C."/>
            <person name="Glavina del Rio T."/>
            <person name="Hammon N."/>
            <person name="Israni S."/>
            <person name="Dalin E."/>
            <person name="Tice H."/>
            <person name="Pitluck S."/>
            <person name="Di Bartolo G."/>
            <person name="Chain P."/>
            <person name="Malfatti S."/>
            <person name="Shin M."/>
            <person name="Vergez L."/>
            <person name="Schmutz J."/>
            <person name="Larimer F."/>
            <person name="Land M."/>
            <person name="Hauser L."/>
            <person name="Worsham P."/>
            <person name="Chu M."/>
            <person name="Bearden S."/>
            <person name="Garcia E."/>
            <person name="Richardson P."/>
        </authorList>
    </citation>
    <scope>NUCLEOTIDE SEQUENCE [LARGE SCALE GENOMIC DNA]</scope>
    <source>
        <strain>Pestoides F</strain>
    </source>
</reference>
<sequence length="598" mass="66642">MRTEYCGQLNLSHVGQSVTLCGWVNRRRDLGGLIFIDMRDREGIVQVFFDPDHKAAFEQASELRNEFCIQITGTVRARPDSQINKDMSTGEVEIFANTLNIINRSEPLPLDSNQINSEEQRLKYRYLDLRRPEMADRLKSRAKITSFVRRFMDDHGFLDIETPMLTKATPEGARDYLVPSRVHKGKFYALPQSPQLFKQLLMMSGFDRYYQIVKCFRDEDLRADRQPEFTQIDVETSFMSADQVREVMEKLVRELWQETKGVDLGDFPVMTFAEAMRRYGSDKPDLRNPLELVDVASLVKDVEFKVFSGPANDAKGRVAALRVPGGAQLSRKQIDEYGQFVGIYGAKGLAWLKVNDRAAGLEGVQSPIAKFLSAEVLDAILVATQAESGDILFFGADSYKIVTDAMGALRLKVGRDLELTRLGTWAPLWVVDFPMFEDDSEGGLTAMHHPFTAPKDMSPEQLAAAPTTAIANAYDMVINGYEVGGGSVRIHRTEMQQTVFGILGITEDEQREKFGFLLDALKFGTPPHAGLAFGLDRLVMLLTGTDNIRDVIAFPKTTAAACLMTDAPSFANPASLQELSISVVAKKGTTDAGAEENQ</sequence>
<feature type="chain" id="PRO_1000006784" description="Aspartate--tRNA ligase">
    <location>
        <begin position="1"/>
        <end position="598"/>
    </location>
</feature>
<feature type="region of interest" description="Aspartate" evidence="1">
    <location>
        <begin position="195"/>
        <end position="198"/>
    </location>
</feature>
<feature type="binding site" evidence="1">
    <location>
        <position position="171"/>
    </location>
    <ligand>
        <name>L-aspartate</name>
        <dbReference type="ChEBI" id="CHEBI:29991"/>
    </ligand>
</feature>
<feature type="binding site" evidence="1">
    <location>
        <begin position="217"/>
        <end position="219"/>
    </location>
    <ligand>
        <name>ATP</name>
        <dbReference type="ChEBI" id="CHEBI:30616"/>
    </ligand>
</feature>
<feature type="binding site" evidence="1">
    <location>
        <position position="217"/>
    </location>
    <ligand>
        <name>L-aspartate</name>
        <dbReference type="ChEBI" id="CHEBI:29991"/>
    </ligand>
</feature>
<feature type="binding site" evidence="1">
    <location>
        <position position="226"/>
    </location>
    <ligand>
        <name>ATP</name>
        <dbReference type="ChEBI" id="CHEBI:30616"/>
    </ligand>
</feature>
<feature type="binding site" evidence="1">
    <location>
        <position position="448"/>
    </location>
    <ligand>
        <name>L-aspartate</name>
        <dbReference type="ChEBI" id="CHEBI:29991"/>
    </ligand>
</feature>
<feature type="binding site" evidence="1">
    <location>
        <position position="482"/>
    </location>
    <ligand>
        <name>ATP</name>
        <dbReference type="ChEBI" id="CHEBI:30616"/>
    </ligand>
</feature>
<feature type="binding site" evidence="1">
    <location>
        <position position="489"/>
    </location>
    <ligand>
        <name>L-aspartate</name>
        <dbReference type="ChEBI" id="CHEBI:29991"/>
    </ligand>
</feature>
<feature type="binding site" evidence="1">
    <location>
        <begin position="534"/>
        <end position="537"/>
    </location>
    <ligand>
        <name>ATP</name>
        <dbReference type="ChEBI" id="CHEBI:30616"/>
    </ligand>
</feature>